<protein>
    <recommendedName>
        <fullName evidence="1">Glutamate 5-kinase</fullName>
        <ecNumber evidence="1">2.7.2.11</ecNumber>
    </recommendedName>
    <alternativeName>
        <fullName evidence="1">Gamma-glutamyl kinase</fullName>
        <shortName evidence="1">GK</shortName>
    </alternativeName>
</protein>
<keyword id="KW-0028">Amino-acid biosynthesis</keyword>
<keyword id="KW-0067">ATP-binding</keyword>
<keyword id="KW-0963">Cytoplasm</keyword>
<keyword id="KW-0418">Kinase</keyword>
<keyword id="KW-0547">Nucleotide-binding</keyword>
<keyword id="KW-0641">Proline biosynthesis</keyword>
<keyword id="KW-0808">Transferase</keyword>
<feature type="chain" id="PRO_0000230047" description="Glutamate 5-kinase">
    <location>
        <begin position="1"/>
        <end position="378"/>
    </location>
</feature>
<feature type="domain" description="PUA" evidence="1">
    <location>
        <begin position="285"/>
        <end position="363"/>
    </location>
</feature>
<feature type="binding site" evidence="1">
    <location>
        <position position="19"/>
    </location>
    <ligand>
        <name>ATP</name>
        <dbReference type="ChEBI" id="CHEBI:30616"/>
    </ligand>
</feature>
<feature type="binding site" evidence="1">
    <location>
        <position position="59"/>
    </location>
    <ligand>
        <name>substrate</name>
    </ligand>
</feature>
<feature type="binding site" evidence="1">
    <location>
        <position position="146"/>
    </location>
    <ligand>
        <name>substrate</name>
    </ligand>
</feature>
<feature type="binding site" evidence="1">
    <location>
        <position position="158"/>
    </location>
    <ligand>
        <name>substrate</name>
    </ligand>
</feature>
<feature type="binding site" evidence="1">
    <location>
        <begin position="178"/>
        <end position="179"/>
    </location>
    <ligand>
        <name>ATP</name>
        <dbReference type="ChEBI" id="CHEBI:30616"/>
    </ligand>
</feature>
<feature type="binding site" evidence="1">
    <location>
        <begin position="220"/>
        <end position="226"/>
    </location>
    <ligand>
        <name>ATP</name>
        <dbReference type="ChEBI" id="CHEBI:30616"/>
    </ligand>
</feature>
<comment type="function">
    <text evidence="1">Catalyzes the transfer of a phosphate group to glutamate to form L-glutamate 5-phosphate.</text>
</comment>
<comment type="catalytic activity">
    <reaction evidence="1">
        <text>L-glutamate + ATP = L-glutamyl 5-phosphate + ADP</text>
        <dbReference type="Rhea" id="RHEA:14877"/>
        <dbReference type="ChEBI" id="CHEBI:29985"/>
        <dbReference type="ChEBI" id="CHEBI:30616"/>
        <dbReference type="ChEBI" id="CHEBI:58274"/>
        <dbReference type="ChEBI" id="CHEBI:456216"/>
        <dbReference type="EC" id="2.7.2.11"/>
    </reaction>
</comment>
<comment type="pathway">
    <text evidence="1">Amino-acid biosynthesis; L-proline biosynthesis; L-glutamate 5-semialdehyde from L-glutamate: step 1/2.</text>
</comment>
<comment type="subcellular location">
    <subcellularLocation>
        <location evidence="1">Cytoplasm</location>
    </subcellularLocation>
</comment>
<comment type="similarity">
    <text evidence="1">Belongs to the glutamate 5-kinase family.</text>
</comment>
<sequence length="378" mass="40117">MTERECRLALSQARRLVIKVGTSTLTHKTGKLNLGRMERLVRELVDQVNAGRQVVLVTSGAVGAGMGRLGLKEKPRTLPEKQAAAAVGQGLLMHMYEKFFSDYGLLVAQVLLTRADLADRSRYLNSRHTLAALLRLGVVPIVNENDTVAVEEIRVGDNDTLSALVAGLVDADILFLLTDTGGLFTANPVTSDDAVLLPCVTEITPEIEALAGGAGSTWSTGGMATKIQAARLATSFGIPVVIASGLQAGQIEAVLKGEEIGTIFLPREHRAHTRKRWLAYAPAVQGQIQVDAGAARAICKNGKSLLPGGVIAVDGDFDQGAIVSIVDPAGKEIARGMANYPAAAISRIKGRKTGEIGEILGYKDYDEIVHRDNLIVLG</sequence>
<proteinExistence type="inferred from homology"/>
<reference key="1">
    <citation type="journal article" date="2008" name="Environ. Microbiol.">
        <title>The complete genome sequence of Moorella thermoacetica (f. Clostridium thermoaceticum).</title>
        <authorList>
            <person name="Pierce E."/>
            <person name="Xie G."/>
            <person name="Barabote R.D."/>
            <person name="Saunders E."/>
            <person name="Han C.S."/>
            <person name="Detter J.C."/>
            <person name="Richardson P."/>
            <person name="Brettin T.S."/>
            <person name="Das A."/>
            <person name="Ljungdahl L.G."/>
            <person name="Ragsdale S.W."/>
        </authorList>
    </citation>
    <scope>NUCLEOTIDE SEQUENCE [LARGE SCALE GENOMIC DNA]</scope>
    <source>
        <strain>ATCC 39073 / JCM 9320</strain>
    </source>
</reference>
<evidence type="ECO:0000255" key="1">
    <source>
        <dbReference type="HAMAP-Rule" id="MF_00456"/>
    </source>
</evidence>
<dbReference type="EC" id="2.7.2.11" evidence="1"/>
<dbReference type="EMBL" id="CP000232">
    <property type="protein sequence ID" value="ABC18892.1"/>
    <property type="molecule type" value="Genomic_DNA"/>
</dbReference>
<dbReference type="RefSeq" id="YP_429435.1">
    <property type="nucleotide sequence ID" value="NC_007644.1"/>
</dbReference>
<dbReference type="SMR" id="Q2RKZ7"/>
<dbReference type="STRING" id="264732.Moth_0562"/>
<dbReference type="EnsemblBacteria" id="ABC18892">
    <property type="protein sequence ID" value="ABC18892"/>
    <property type="gene ID" value="Moth_0562"/>
</dbReference>
<dbReference type="KEGG" id="mta:Moth_0562"/>
<dbReference type="PATRIC" id="fig|264732.11.peg.605"/>
<dbReference type="eggNOG" id="COG0263">
    <property type="taxonomic scope" value="Bacteria"/>
</dbReference>
<dbReference type="HOGENOM" id="CLU_025400_2_0_9"/>
<dbReference type="OrthoDB" id="9804434at2"/>
<dbReference type="UniPathway" id="UPA00098">
    <property type="reaction ID" value="UER00359"/>
</dbReference>
<dbReference type="GO" id="GO:0005829">
    <property type="term" value="C:cytosol"/>
    <property type="evidence" value="ECO:0007669"/>
    <property type="project" value="TreeGrafter"/>
</dbReference>
<dbReference type="GO" id="GO:0005524">
    <property type="term" value="F:ATP binding"/>
    <property type="evidence" value="ECO:0007669"/>
    <property type="project" value="UniProtKB-KW"/>
</dbReference>
<dbReference type="GO" id="GO:0004349">
    <property type="term" value="F:glutamate 5-kinase activity"/>
    <property type="evidence" value="ECO:0007669"/>
    <property type="project" value="UniProtKB-UniRule"/>
</dbReference>
<dbReference type="GO" id="GO:0003723">
    <property type="term" value="F:RNA binding"/>
    <property type="evidence" value="ECO:0007669"/>
    <property type="project" value="InterPro"/>
</dbReference>
<dbReference type="GO" id="GO:0055129">
    <property type="term" value="P:L-proline biosynthetic process"/>
    <property type="evidence" value="ECO:0007669"/>
    <property type="project" value="UniProtKB-UniRule"/>
</dbReference>
<dbReference type="CDD" id="cd04242">
    <property type="entry name" value="AAK_G5K_ProB"/>
    <property type="match status" value="1"/>
</dbReference>
<dbReference type="CDD" id="cd21157">
    <property type="entry name" value="PUA_G5K"/>
    <property type="match status" value="1"/>
</dbReference>
<dbReference type="FunFam" id="2.30.130.10:FF:000007">
    <property type="entry name" value="Glutamate 5-kinase"/>
    <property type="match status" value="1"/>
</dbReference>
<dbReference type="FunFam" id="3.40.1160.10:FF:000018">
    <property type="entry name" value="Glutamate 5-kinase"/>
    <property type="match status" value="1"/>
</dbReference>
<dbReference type="Gene3D" id="3.40.1160.10">
    <property type="entry name" value="Acetylglutamate kinase-like"/>
    <property type="match status" value="2"/>
</dbReference>
<dbReference type="Gene3D" id="2.30.130.10">
    <property type="entry name" value="PUA domain"/>
    <property type="match status" value="1"/>
</dbReference>
<dbReference type="HAMAP" id="MF_00456">
    <property type="entry name" value="ProB"/>
    <property type="match status" value="1"/>
</dbReference>
<dbReference type="InterPro" id="IPR036393">
    <property type="entry name" value="AceGlu_kinase-like_sf"/>
</dbReference>
<dbReference type="InterPro" id="IPR001048">
    <property type="entry name" value="Asp/Glu/Uridylate_kinase"/>
</dbReference>
<dbReference type="InterPro" id="IPR041739">
    <property type="entry name" value="G5K_ProB"/>
</dbReference>
<dbReference type="InterPro" id="IPR001057">
    <property type="entry name" value="Glu/AcGlu_kinase"/>
</dbReference>
<dbReference type="InterPro" id="IPR011529">
    <property type="entry name" value="Glu_5kinase"/>
</dbReference>
<dbReference type="InterPro" id="IPR005715">
    <property type="entry name" value="Glu_5kinase/COase_Synthase"/>
</dbReference>
<dbReference type="InterPro" id="IPR019797">
    <property type="entry name" value="Glutamate_5-kinase_CS"/>
</dbReference>
<dbReference type="InterPro" id="IPR002478">
    <property type="entry name" value="PUA"/>
</dbReference>
<dbReference type="InterPro" id="IPR015947">
    <property type="entry name" value="PUA-like_sf"/>
</dbReference>
<dbReference type="InterPro" id="IPR036974">
    <property type="entry name" value="PUA_sf"/>
</dbReference>
<dbReference type="NCBIfam" id="TIGR01027">
    <property type="entry name" value="proB"/>
    <property type="match status" value="1"/>
</dbReference>
<dbReference type="PANTHER" id="PTHR43654">
    <property type="entry name" value="GLUTAMATE 5-KINASE"/>
    <property type="match status" value="1"/>
</dbReference>
<dbReference type="PANTHER" id="PTHR43654:SF1">
    <property type="entry name" value="ISOPENTENYL PHOSPHATE KINASE"/>
    <property type="match status" value="1"/>
</dbReference>
<dbReference type="Pfam" id="PF00696">
    <property type="entry name" value="AA_kinase"/>
    <property type="match status" value="1"/>
</dbReference>
<dbReference type="Pfam" id="PF01472">
    <property type="entry name" value="PUA"/>
    <property type="match status" value="1"/>
</dbReference>
<dbReference type="PIRSF" id="PIRSF000729">
    <property type="entry name" value="GK"/>
    <property type="match status" value="1"/>
</dbReference>
<dbReference type="PRINTS" id="PR00474">
    <property type="entry name" value="GLU5KINASE"/>
</dbReference>
<dbReference type="SMART" id="SM00359">
    <property type="entry name" value="PUA"/>
    <property type="match status" value="1"/>
</dbReference>
<dbReference type="SUPFAM" id="SSF53633">
    <property type="entry name" value="Carbamate kinase-like"/>
    <property type="match status" value="1"/>
</dbReference>
<dbReference type="SUPFAM" id="SSF88697">
    <property type="entry name" value="PUA domain-like"/>
    <property type="match status" value="1"/>
</dbReference>
<dbReference type="PROSITE" id="PS00902">
    <property type="entry name" value="GLUTAMATE_5_KINASE"/>
    <property type="match status" value="1"/>
</dbReference>
<dbReference type="PROSITE" id="PS50890">
    <property type="entry name" value="PUA"/>
    <property type="match status" value="1"/>
</dbReference>
<accession>Q2RKZ7</accession>
<name>PROB_MOOTA</name>
<organism>
    <name type="scientific">Moorella thermoacetica (strain ATCC 39073 / JCM 9320)</name>
    <dbReference type="NCBI Taxonomy" id="264732"/>
    <lineage>
        <taxon>Bacteria</taxon>
        <taxon>Bacillati</taxon>
        <taxon>Bacillota</taxon>
        <taxon>Clostridia</taxon>
        <taxon>Moorellales</taxon>
        <taxon>Moorellaceae</taxon>
        <taxon>Moorella</taxon>
    </lineage>
</organism>
<gene>
    <name evidence="1" type="primary">proB</name>
    <name type="ordered locus">Moth_0562</name>
</gene>